<protein>
    <recommendedName>
        <fullName evidence="1">ATP synthase subunit delta 1</fullName>
    </recommendedName>
    <alternativeName>
        <fullName evidence="1">ATP synthase F(1) sector subunit delta 1</fullName>
    </alternativeName>
    <alternativeName>
        <fullName evidence="1">F-type ATPase subunit delta 1</fullName>
        <shortName evidence="1">F-ATPase subunit delta 1</shortName>
    </alternativeName>
</protein>
<dbReference type="EMBL" id="FM954972">
    <property type="protein sequence ID" value="CAV20407.1"/>
    <property type="molecule type" value="Genomic_DNA"/>
</dbReference>
<dbReference type="SMR" id="B7VMZ9"/>
<dbReference type="STRING" id="575788.VS_3155"/>
<dbReference type="KEGG" id="vsp:VS_3155"/>
<dbReference type="eggNOG" id="COG0712">
    <property type="taxonomic scope" value="Bacteria"/>
</dbReference>
<dbReference type="HOGENOM" id="CLU_085114_3_0_6"/>
<dbReference type="Proteomes" id="UP000009100">
    <property type="component" value="Chromosome 1"/>
</dbReference>
<dbReference type="GO" id="GO:0005886">
    <property type="term" value="C:plasma membrane"/>
    <property type="evidence" value="ECO:0007669"/>
    <property type="project" value="UniProtKB-SubCell"/>
</dbReference>
<dbReference type="GO" id="GO:0045259">
    <property type="term" value="C:proton-transporting ATP synthase complex"/>
    <property type="evidence" value="ECO:0007669"/>
    <property type="project" value="UniProtKB-KW"/>
</dbReference>
<dbReference type="GO" id="GO:0046933">
    <property type="term" value="F:proton-transporting ATP synthase activity, rotational mechanism"/>
    <property type="evidence" value="ECO:0007669"/>
    <property type="project" value="UniProtKB-UniRule"/>
</dbReference>
<dbReference type="Gene3D" id="1.10.520.20">
    <property type="entry name" value="N-terminal domain of the delta subunit of the F1F0-ATP synthase"/>
    <property type="match status" value="1"/>
</dbReference>
<dbReference type="HAMAP" id="MF_01416">
    <property type="entry name" value="ATP_synth_delta_bact"/>
    <property type="match status" value="1"/>
</dbReference>
<dbReference type="InterPro" id="IPR026015">
    <property type="entry name" value="ATP_synth_OSCP/delta_N_sf"/>
</dbReference>
<dbReference type="InterPro" id="IPR020781">
    <property type="entry name" value="ATPase_OSCP/d_CS"/>
</dbReference>
<dbReference type="InterPro" id="IPR000711">
    <property type="entry name" value="ATPase_OSCP/dsu"/>
</dbReference>
<dbReference type="NCBIfam" id="TIGR01145">
    <property type="entry name" value="ATP_synt_delta"/>
    <property type="match status" value="1"/>
</dbReference>
<dbReference type="NCBIfam" id="NF004402">
    <property type="entry name" value="PRK05758.2-2"/>
    <property type="match status" value="1"/>
</dbReference>
<dbReference type="NCBIfam" id="NF004404">
    <property type="entry name" value="PRK05758.2-5"/>
    <property type="match status" value="1"/>
</dbReference>
<dbReference type="PANTHER" id="PTHR11910">
    <property type="entry name" value="ATP SYNTHASE DELTA CHAIN"/>
    <property type="match status" value="1"/>
</dbReference>
<dbReference type="Pfam" id="PF00213">
    <property type="entry name" value="OSCP"/>
    <property type="match status" value="1"/>
</dbReference>
<dbReference type="PRINTS" id="PR00125">
    <property type="entry name" value="ATPASEDELTA"/>
</dbReference>
<dbReference type="SUPFAM" id="SSF47928">
    <property type="entry name" value="N-terminal domain of the delta subunit of the F1F0-ATP synthase"/>
    <property type="match status" value="1"/>
</dbReference>
<dbReference type="PROSITE" id="PS00389">
    <property type="entry name" value="ATPASE_DELTA"/>
    <property type="match status" value="1"/>
</dbReference>
<sequence length="177" mass="19770">MSDLTTIARPYAKAAFDFAVDKGELDQWGQMLTFAAEVAQNDDVHNLLSGSMTAEKLAEVFIVICGEQFDEFGQNLIKVMAENGRLMAFPDVCKEFFILKKEYEKEIDVEVTSAVELSEEQRAEISSKLEQRLARKVQLNCSIDETLLSGVIIRAGDLVIDNSARSRLDRLSDALQS</sequence>
<name>ATPD1_VIBA3</name>
<proteinExistence type="inferred from homology"/>
<accession>B7VMZ9</accession>
<gene>
    <name evidence="1" type="primary">atpH1</name>
    <name type="ordered locus">VS_3155</name>
</gene>
<keyword id="KW-0066">ATP synthesis</keyword>
<keyword id="KW-0997">Cell inner membrane</keyword>
<keyword id="KW-1003">Cell membrane</keyword>
<keyword id="KW-0139">CF(1)</keyword>
<keyword id="KW-0375">Hydrogen ion transport</keyword>
<keyword id="KW-0406">Ion transport</keyword>
<keyword id="KW-0472">Membrane</keyword>
<keyword id="KW-0813">Transport</keyword>
<evidence type="ECO:0000255" key="1">
    <source>
        <dbReference type="HAMAP-Rule" id="MF_01416"/>
    </source>
</evidence>
<comment type="function">
    <text evidence="1">F(1)F(0) ATP synthase produces ATP from ADP in the presence of a proton or sodium gradient. F-type ATPases consist of two structural domains, F(1) containing the extramembraneous catalytic core and F(0) containing the membrane proton channel, linked together by a central stalk and a peripheral stalk. During catalysis, ATP synthesis in the catalytic domain of F(1) is coupled via a rotary mechanism of the central stalk subunits to proton translocation.</text>
</comment>
<comment type="function">
    <text evidence="1">This protein is part of the stalk that links CF(0) to CF(1). It either transmits conformational changes from CF(0) to CF(1) or is implicated in proton conduction.</text>
</comment>
<comment type="subunit">
    <text evidence="1">F-type ATPases have 2 components, F(1) - the catalytic core - and F(0) - the membrane proton channel. F(1) has five subunits: alpha(3), beta(3), gamma(1), delta(1), epsilon(1). F(0) has three main subunits: a(1), b(2) and c(10-14). The alpha and beta chains form an alternating ring which encloses part of the gamma chain. F(1) is attached to F(0) by a central stalk formed by the gamma and epsilon chains, while a peripheral stalk is formed by the delta and b chains.</text>
</comment>
<comment type="subcellular location">
    <subcellularLocation>
        <location evidence="1">Cell inner membrane</location>
        <topology evidence="1">Peripheral membrane protein</topology>
    </subcellularLocation>
</comment>
<comment type="similarity">
    <text evidence="1">Belongs to the ATPase delta chain family.</text>
</comment>
<feature type="chain" id="PRO_0000382169" description="ATP synthase subunit delta 1">
    <location>
        <begin position="1"/>
        <end position="177"/>
    </location>
</feature>
<reference key="1">
    <citation type="submission" date="2009-02" db="EMBL/GenBank/DDBJ databases">
        <title>Vibrio splendidus str. LGP32 complete genome.</title>
        <authorList>
            <person name="Mazel D."/>
            <person name="Le Roux F."/>
        </authorList>
    </citation>
    <scope>NUCLEOTIDE SEQUENCE [LARGE SCALE GENOMIC DNA]</scope>
    <source>
        <strain>LGP32</strain>
    </source>
</reference>
<organism>
    <name type="scientific">Vibrio atlanticus (strain LGP32)</name>
    <name type="common">Vibrio splendidus (strain Mel32)</name>
    <dbReference type="NCBI Taxonomy" id="575788"/>
    <lineage>
        <taxon>Bacteria</taxon>
        <taxon>Pseudomonadati</taxon>
        <taxon>Pseudomonadota</taxon>
        <taxon>Gammaproteobacteria</taxon>
        <taxon>Vibrionales</taxon>
        <taxon>Vibrionaceae</taxon>
        <taxon>Vibrio</taxon>
    </lineage>
</organism>